<reference key="1">
    <citation type="journal article" date="2000" name="J. Biol. Chem.">
        <title>Zinedin, SG2NA, and striatin are calmodulin-binding, WD repeat proteins principally expressed in the brain.</title>
        <authorList>
            <person name="Castets F."/>
            <person name="Rakitina T."/>
            <person name="Gaillard S."/>
            <person name="Moqrich A."/>
            <person name="Mattei M.-G."/>
            <person name="Monneron A."/>
        </authorList>
    </citation>
    <scope>NUCLEOTIDE SEQUENCE [MRNA] (ISOFORM 1)</scope>
</reference>
<reference key="2">
    <citation type="journal article" date="2004" name="Nat. Genet.">
        <title>Complete sequencing and characterization of 21,243 full-length human cDNAs.</title>
        <authorList>
            <person name="Ota T."/>
            <person name="Suzuki Y."/>
            <person name="Nishikawa T."/>
            <person name="Otsuki T."/>
            <person name="Sugiyama T."/>
            <person name="Irie R."/>
            <person name="Wakamatsu A."/>
            <person name="Hayashi K."/>
            <person name="Sato H."/>
            <person name="Nagai K."/>
            <person name="Kimura K."/>
            <person name="Makita H."/>
            <person name="Sekine M."/>
            <person name="Obayashi M."/>
            <person name="Nishi T."/>
            <person name="Shibahara T."/>
            <person name="Tanaka T."/>
            <person name="Ishii S."/>
            <person name="Yamamoto J."/>
            <person name="Saito K."/>
            <person name="Kawai Y."/>
            <person name="Isono Y."/>
            <person name="Nakamura Y."/>
            <person name="Nagahari K."/>
            <person name="Murakami K."/>
            <person name="Yasuda T."/>
            <person name="Iwayanagi T."/>
            <person name="Wagatsuma M."/>
            <person name="Shiratori A."/>
            <person name="Sudo H."/>
            <person name="Hosoiri T."/>
            <person name="Kaku Y."/>
            <person name="Kodaira H."/>
            <person name="Kondo H."/>
            <person name="Sugawara M."/>
            <person name="Takahashi M."/>
            <person name="Kanda K."/>
            <person name="Yokoi T."/>
            <person name="Furuya T."/>
            <person name="Kikkawa E."/>
            <person name="Omura Y."/>
            <person name="Abe K."/>
            <person name="Kamihara K."/>
            <person name="Katsuta N."/>
            <person name="Sato K."/>
            <person name="Tanikawa M."/>
            <person name="Yamazaki M."/>
            <person name="Ninomiya K."/>
            <person name="Ishibashi T."/>
            <person name="Yamashita H."/>
            <person name="Murakawa K."/>
            <person name="Fujimori K."/>
            <person name="Tanai H."/>
            <person name="Kimata M."/>
            <person name="Watanabe M."/>
            <person name="Hiraoka S."/>
            <person name="Chiba Y."/>
            <person name="Ishida S."/>
            <person name="Ono Y."/>
            <person name="Takiguchi S."/>
            <person name="Watanabe S."/>
            <person name="Yosida M."/>
            <person name="Hotuta T."/>
            <person name="Kusano J."/>
            <person name="Kanehori K."/>
            <person name="Takahashi-Fujii A."/>
            <person name="Hara H."/>
            <person name="Tanase T.-O."/>
            <person name="Nomura Y."/>
            <person name="Togiya S."/>
            <person name="Komai F."/>
            <person name="Hara R."/>
            <person name="Takeuchi K."/>
            <person name="Arita M."/>
            <person name="Imose N."/>
            <person name="Musashino K."/>
            <person name="Yuuki H."/>
            <person name="Oshima A."/>
            <person name="Sasaki N."/>
            <person name="Aotsuka S."/>
            <person name="Yoshikawa Y."/>
            <person name="Matsunawa H."/>
            <person name="Ichihara T."/>
            <person name="Shiohata N."/>
            <person name="Sano S."/>
            <person name="Moriya S."/>
            <person name="Momiyama H."/>
            <person name="Satoh N."/>
            <person name="Takami S."/>
            <person name="Terashima Y."/>
            <person name="Suzuki O."/>
            <person name="Nakagawa S."/>
            <person name="Senoh A."/>
            <person name="Mizoguchi H."/>
            <person name="Goto Y."/>
            <person name="Shimizu F."/>
            <person name="Wakebe H."/>
            <person name="Hishigaki H."/>
            <person name="Watanabe T."/>
            <person name="Sugiyama A."/>
            <person name="Takemoto M."/>
            <person name="Kawakami B."/>
            <person name="Yamazaki M."/>
            <person name="Watanabe K."/>
            <person name="Kumagai A."/>
            <person name="Itakura S."/>
            <person name="Fukuzumi Y."/>
            <person name="Fujimori Y."/>
            <person name="Komiyama M."/>
            <person name="Tashiro H."/>
            <person name="Tanigami A."/>
            <person name="Fujiwara T."/>
            <person name="Ono T."/>
            <person name="Yamada K."/>
            <person name="Fujii Y."/>
            <person name="Ozaki K."/>
            <person name="Hirao M."/>
            <person name="Ohmori Y."/>
            <person name="Kawabata A."/>
            <person name="Hikiji T."/>
            <person name="Kobatake N."/>
            <person name="Inagaki H."/>
            <person name="Ikema Y."/>
            <person name="Okamoto S."/>
            <person name="Okitani R."/>
            <person name="Kawakami T."/>
            <person name="Noguchi S."/>
            <person name="Itoh T."/>
            <person name="Shigeta K."/>
            <person name="Senba T."/>
            <person name="Matsumura K."/>
            <person name="Nakajima Y."/>
            <person name="Mizuno T."/>
            <person name="Morinaga M."/>
            <person name="Sasaki M."/>
            <person name="Togashi T."/>
            <person name="Oyama M."/>
            <person name="Hata H."/>
            <person name="Watanabe M."/>
            <person name="Komatsu T."/>
            <person name="Mizushima-Sugano J."/>
            <person name="Satoh T."/>
            <person name="Shirai Y."/>
            <person name="Takahashi Y."/>
            <person name="Nakagawa K."/>
            <person name="Okumura K."/>
            <person name="Nagase T."/>
            <person name="Nomura N."/>
            <person name="Kikuchi H."/>
            <person name="Masuho Y."/>
            <person name="Yamashita R."/>
            <person name="Nakai K."/>
            <person name="Yada T."/>
            <person name="Nakamura Y."/>
            <person name="Ohara O."/>
            <person name="Isogai T."/>
            <person name="Sugano S."/>
        </authorList>
    </citation>
    <scope>NUCLEOTIDE SEQUENCE [LARGE SCALE MRNA] (ISOFORM 2)</scope>
</reference>
<reference key="3">
    <citation type="journal article" date="2004" name="Nature">
        <title>The DNA sequence and biology of human chromosome 19.</title>
        <authorList>
            <person name="Grimwood J."/>
            <person name="Gordon L.A."/>
            <person name="Olsen A.S."/>
            <person name="Terry A."/>
            <person name="Schmutz J."/>
            <person name="Lamerdin J.E."/>
            <person name="Hellsten U."/>
            <person name="Goodstein D."/>
            <person name="Couronne O."/>
            <person name="Tran-Gyamfi M."/>
            <person name="Aerts A."/>
            <person name="Altherr M."/>
            <person name="Ashworth L."/>
            <person name="Bajorek E."/>
            <person name="Black S."/>
            <person name="Branscomb E."/>
            <person name="Caenepeel S."/>
            <person name="Carrano A.V."/>
            <person name="Caoile C."/>
            <person name="Chan Y.M."/>
            <person name="Christensen M."/>
            <person name="Cleland C.A."/>
            <person name="Copeland A."/>
            <person name="Dalin E."/>
            <person name="Dehal P."/>
            <person name="Denys M."/>
            <person name="Detter J.C."/>
            <person name="Escobar J."/>
            <person name="Flowers D."/>
            <person name="Fotopulos D."/>
            <person name="Garcia C."/>
            <person name="Georgescu A.M."/>
            <person name="Glavina T."/>
            <person name="Gomez M."/>
            <person name="Gonzales E."/>
            <person name="Groza M."/>
            <person name="Hammon N."/>
            <person name="Hawkins T."/>
            <person name="Haydu L."/>
            <person name="Ho I."/>
            <person name="Huang W."/>
            <person name="Israni S."/>
            <person name="Jett J."/>
            <person name="Kadner K."/>
            <person name="Kimball H."/>
            <person name="Kobayashi A."/>
            <person name="Larionov V."/>
            <person name="Leem S.-H."/>
            <person name="Lopez F."/>
            <person name="Lou Y."/>
            <person name="Lowry S."/>
            <person name="Malfatti S."/>
            <person name="Martinez D."/>
            <person name="McCready P.M."/>
            <person name="Medina C."/>
            <person name="Morgan J."/>
            <person name="Nelson K."/>
            <person name="Nolan M."/>
            <person name="Ovcharenko I."/>
            <person name="Pitluck S."/>
            <person name="Pollard M."/>
            <person name="Popkie A.P."/>
            <person name="Predki P."/>
            <person name="Quan G."/>
            <person name="Ramirez L."/>
            <person name="Rash S."/>
            <person name="Retterer J."/>
            <person name="Rodriguez A."/>
            <person name="Rogers S."/>
            <person name="Salamov A."/>
            <person name="Salazar A."/>
            <person name="She X."/>
            <person name="Smith D."/>
            <person name="Slezak T."/>
            <person name="Solovyev V."/>
            <person name="Thayer N."/>
            <person name="Tice H."/>
            <person name="Tsai M."/>
            <person name="Ustaszewska A."/>
            <person name="Vo N."/>
            <person name="Wagner M."/>
            <person name="Wheeler J."/>
            <person name="Wu K."/>
            <person name="Xie G."/>
            <person name="Yang J."/>
            <person name="Dubchak I."/>
            <person name="Furey T.S."/>
            <person name="DeJong P."/>
            <person name="Dickson M."/>
            <person name="Gordon D."/>
            <person name="Eichler E.E."/>
            <person name="Pennacchio L.A."/>
            <person name="Richardson P."/>
            <person name="Stubbs L."/>
            <person name="Rokhsar D.S."/>
            <person name="Myers R.M."/>
            <person name="Rubin E.M."/>
            <person name="Lucas S.M."/>
        </authorList>
    </citation>
    <scope>NUCLEOTIDE SEQUENCE [LARGE SCALE GENOMIC DNA]</scope>
</reference>
<reference key="4">
    <citation type="submission" date="2005-07" db="EMBL/GenBank/DDBJ databases">
        <authorList>
            <person name="Mural R.J."/>
            <person name="Istrail S."/>
            <person name="Sutton G.G."/>
            <person name="Florea L."/>
            <person name="Halpern A.L."/>
            <person name="Mobarry C.M."/>
            <person name="Lippert R."/>
            <person name="Walenz B."/>
            <person name="Shatkay H."/>
            <person name="Dew I."/>
            <person name="Miller J.R."/>
            <person name="Flanigan M.J."/>
            <person name="Edwards N.J."/>
            <person name="Bolanos R."/>
            <person name="Fasulo D."/>
            <person name="Halldorsson B.V."/>
            <person name="Hannenhalli S."/>
            <person name="Turner R."/>
            <person name="Yooseph S."/>
            <person name="Lu F."/>
            <person name="Nusskern D.R."/>
            <person name="Shue B.C."/>
            <person name="Zheng X.H."/>
            <person name="Zhong F."/>
            <person name="Delcher A.L."/>
            <person name="Huson D.H."/>
            <person name="Kravitz S.A."/>
            <person name="Mouchard L."/>
            <person name="Reinert K."/>
            <person name="Remington K.A."/>
            <person name="Clark A.G."/>
            <person name="Waterman M.S."/>
            <person name="Eichler E.E."/>
            <person name="Adams M.D."/>
            <person name="Hunkapiller M.W."/>
            <person name="Myers E.W."/>
            <person name="Venter J.C."/>
        </authorList>
    </citation>
    <scope>NUCLEOTIDE SEQUENCE [LARGE SCALE GENOMIC DNA]</scope>
</reference>
<reference key="5">
    <citation type="journal article" date="2004" name="Genome Res.">
        <title>The status, quality, and expansion of the NIH full-length cDNA project: the Mammalian Gene Collection (MGC).</title>
        <authorList>
            <consortium name="The MGC Project Team"/>
        </authorList>
    </citation>
    <scope>NUCLEOTIDE SEQUENCE [LARGE SCALE MRNA] (ISOFORM 1)</scope>
    <source>
        <tissue>Muscle</tissue>
        <tissue>Testis</tissue>
    </source>
</reference>
<reference key="6">
    <citation type="journal article" date="2006" name="Cell">
        <title>Global, in vivo, and site-specific phosphorylation dynamics in signaling networks.</title>
        <authorList>
            <person name="Olsen J.V."/>
            <person name="Blagoev B."/>
            <person name="Gnad F."/>
            <person name="Macek B."/>
            <person name="Kumar C."/>
            <person name="Mortensen P."/>
            <person name="Mann M."/>
        </authorList>
    </citation>
    <scope>IDENTIFICATION BY MASS SPECTROMETRY [LARGE SCALE ANALYSIS]</scope>
    <source>
        <tissue>Cervix carcinoma</tissue>
    </source>
</reference>
<reference key="7">
    <citation type="journal article" date="2008" name="Proc. Natl. Acad. Sci. U.S.A.">
        <title>A quantitative atlas of mitotic phosphorylation.</title>
        <authorList>
            <person name="Dephoure N."/>
            <person name="Zhou C."/>
            <person name="Villen J."/>
            <person name="Beausoleil S.A."/>
            <person name="Bakalarski C.E."/>
            <person name="Elledge S.J."/>
            <person name="Gygi S.P."/>
        </authorList>
    </citation>
    <scope>PHOSPHORYLATION [LARGE SCALE ANALYSIS] AT SER-276</scope>
    <scope>IDENTIFICATION BY MASS SPECTROMETRY [LARGE SCALE ANALYSIS]</scope>
    <source>
        <tissue>Cervix carcinoma</tissue>
    </source>
</reference>
<reference key="8">
    <citation type="journal article" date="2009" name="Anal. Chem.">
        <title>Lys-N and trypsin cover complementary parts of the phosphoproteome in a refined SCX-based approach.</title>
        <authorList>
            <person name="Gauci S."/>
            <person name="Helbig A.O."/>
            <person name="Slijper M."/>
            <person name="Krijgsveld J."/>
            <person name="Heck A.J."/>
            <person name="Mohammed S."/>
        </authorList>
    </citation>
    <scope>IDENTIFICATION BY MASS SPECTROMETRY [LARGE SCALE ANALYSIS]</scope>
</reference>
<reference key="9">
    <citation type="journal article" date="2009" name="Mol. Cell. Proteomics">
        <title>A PP2A phosphatase high density interaction network identifies a novel striatin-interacting phosphatase and kinase complex linked to the cerebral cavernous malformation 3 (CCM3) protein.</title>
        <authorList>
            <person name="Goudreault M."/>
            <person name="D'Ambrosio L.M."/>
            <person name="Kean M.J."/>
            <person name="Mullin M.J."/>
            <person name="Larsen B.G."/>
            <person name="Sanchez A."/>
            <person name="Chaudhry S."/>
            <person name="Chen G.I."/>
            <person name="Sicheri F."/>
            <person name="Nesvizhskii A.I."/>
            <person name="Aebersold R."/>
            <person name="Raught B."/>
            <person name="Gingras A.C."/>
        </authorList>
    </citation>
    <scope>INTERACTION WITH CTTNBP2NL</scope>
    <scope>IDENTIFICATION IN STRIPAK COMPLEX</scope>
    <scope>FUNCTION</scope>
    <scope>SUBCELLULAR LOCATION</scope>
</reference>
<reference key="10">
    <citation type="journal article" date="2009" name="Sci. Signal.">
        <title>Quantitative phosphoproteomic analysis of T cell receptor signaling reveals system-wide modulation of protein-protein interactions.</title>
        <authorList>
            <person name="Mayya V."/>
            <person name="Lundgren D.H."/>
            <person name="Hwang S.-I."/>
            <person name="Rezaul K."/>
            <person name="Wu L."/>
            <person name="Eng J.K."/>
            <person name="Rodionov V."/>
            <person name="Han D.K."/>
        </authorList>
    </citation>
    <scope>PHOSPHORYLATION [LARGE SCALE ANALYSIS] AT SER-206</scope>
    <scope>IDENTIFICATION BY MASS SPECTROMETRY [LARGE SCALE ANALYSIS]</scope>
    <source>
        <tissue>Leukemic T-cell</tissue>
    </source>
</reference>
<reference key="11">
    <citation type="journal article" date="2010" name="Sci. Signal.">
        <title>Quantitative phosphoproteomics reveals widespread full phosphorylation site occupancy during mitosis.</title>
        <authorList>
            <person name="Olsen J.V."/>
            <person name="Vermeulen M."/>
            <person name="Santamaria A."/>
            <person name="Kumar C."/>
            <person name="Miller M.L."/>
            <person name="Jensen L.J."/>
            <person name="Gnad F."/>
            <person name="Cox J."/>
            <person name="Jensen T.S."/>
            <person name="Nigg E.A."/>
            <person name="Brunak S."/>
            <person name="Mann M."/>
        </authorList>
    </citation>
    <scope>PHOSPHORYLATION [LARGE SCALE ANALYSIS] AT SER-53 AND SER-206</scope>
    <scope>IDENTIFICATION BY MASS SPECTROMETRY [LARGE SCALE ANALYSIS]</scope>
    <source>
        <tissue>Cervix carcinoma</tissue>
    </source>
</reference>
<reference key="12">
    <citation type="journal article" date="2011" name="BMC Syst. Biol.">
        <title>Initial characterization of the human central proteome.</title>
        <authorList>
            <person name="Burkard T.R."/>
            <person name="Planyavsky M."/>
            <person name="Kaupe I."/>
            <person name="Breitwieser F.P."/>
            <person name="Buerckstuemmer T."/>
            <person name="Bennett K.L."/>
            <person name="Superti-Furga G."/>
            <person name="Colinge J."/>
        </authorList>
    </citation>
    <scope>IDENTIFICATION BY MASS SPECTROMETRY [LARGE SCALE ANALYSIS]</scope>
</reference>
<reference key="13">
    <citation type="journal article" date="2011" name="Sci. Signal.">
        <title>System-wide temporal characterization of the proteome and phosphoproteome of human embryonic stem cell differentiation.</title>
        <authorList>
            <person name="Rigbolt K.T."/>
            <person name="Prokhorova T.A."/>
            <person name="Akimov V."/>
            <person name="Henningsen J."/>
            <person name="Johansen P.T."/>
            <person name="Kratchmarova I."/>
            <person name="Kassem M."/>
            <person name="Mann M."/>
            <person name="Olsen J.V."/>
            <person name="Blagoev B."/>
        </authorList>
    </citation>
    <scope>PHOSPHORYLATION [LARGE SCALE ANALYSIS] AT SER-53</scope>
    <scope>IDENTIFICATION BY MASS SPECTROMETRY [LARGE SCALE ANALYSIS]</scope>
</reference>
<reference key="14">
    <citation type="journal article" date="2013" name="J. Proteome Res.">
        <title>Toward a comprehensive characterization of a human cancer cell phosphoproteome.</title>
        <authorList>
            <person name="Zhou H."/>
            <person name="Di Palma S."/>
            <person name="Preisinger C."/>
            <person name="Peng M."/>
            <person name="Polat A.N."/>
            <person name="Heck A.J."/>
            <person name="Mohammed S."/>
        </authorList>
    </citation>
    <scope>PHOSPHORYLATION [LARGE SCALE ANALYSIS] AT SER-206</scope>
    <scope>IDENTIFICATION BY MASS SPECTROMETRY [LARGE SCALE ANALYSIS]</scope>
    <source>
        <tissue>Cervix carcinoma</tissue>
        <tissue>Erythroleukemia</tissue>
    </source>
</reference>
<reference key="15">
    <citation type="journal article" date="2016" name="Oncogene">
        <title>STRIPAK complexes in cell signaling and cancer.</title>
        <authorList>
            <person name="Shi Z."/>
            <person name="Jiao S."/>
            <person name="Zhou Z."/>
        </authorList>
    </citation>
    <scope>REVIEW OF FUNCTION</scope>
</reference>
<reference key="16">
    <citation type="journal article" date="2020" name="Cell Rep.">
        <title>MAP4K Interactome Reveals STRN4 as a Key STRIPAK Complex Component in Hippo Pathway Regulation.</title>
        <authorList>
            <person name="Seo G."/>
            <person name="Han H."/>
            <person name="Vargas R.E."/>
            <person name="Yang B."/>
            <person name="Li X."/>
            <person name="Wang W."/>
        </authorList>
    </citation>
    <scope>FUNCTION</scope>
    <scope>IDENTIFICATION IN STRIPAK COMPLEX</scope>
</reference>
<feature type="chain" id="PRO_0000051239" description="Striatin-4">
    <location>
        <begin position="1"/>
        <end position="753"/>
    </location>
</feature>
<feature type="repeat" description="WD 1" evidence="1">
    <location>
        <begin position="436"/>
        <end position="475"/>
    </location>
</feature>
<feature type="repeat" description="WD 2" evidence="1">
    <location>
        <begin position="489"/>
        <end position="528"/>
    </location>
</feature>
<feature type="repeat" description="WD 3" evidence="1">
    <location>
        <begin position="542"/>
        <end position="581"/>
    </location>
</feature>
<feature type="repeat" description="WD 4" evidence="1">
    <location>
        <begin position="587"/>
        <end position="628"/>
    </location>
</feature>
<feature type="repeat" description="WD 5" evidence="1">
    <location>
        <begin position="635"/>
        <end position="674"/>
    </location>
</feature>
<feature type="repeat" description="WD 6" evidence="1">
    <location>
        <begin position="677"/>
        <end position="716"/>
    </location>
</feature>
<feature type="repeat" description="WD 7" evidence="1">
    <location>
        <begin position="723"/>
        <end position="753"/>
    </location>
</feature>
<feature type="region of interest" description="Disordered" evidence="2">
    <location>
        <begin position="10"/>
        <end position="65"/>
    </location>
</feature>
<feature type="region of interest" description="Caveolin-binding" evidence="1">
    <location>
        <begin position="71"/>
        <end position="79"/>
    </location>
</feature>
<feature type="region of interest" description="Calmodulin-binding" evidence="1">
    <location>
        <begin position="165"/>
        <end position="182"/>
    </location>
</feature>
<feature type="region of interest" description="Disordered" evidence="2">
    <location>
        <begin position="213"/>
        <end position="232"/>
    </location>
</feature>
<feature type="region of interest" description="Disordered" evidence="2">
    <location>
        <begin position="271"/>
        <end position="345"/>
    </location>
</feature>
<feature type="region of interest" description="Disordered" evidence="2">
    <location>
        <begin position="363"/>
        <end position="382"/>
    </location>
</feature>
<feature type="coiled-coil region" evidence="1">
    <location>
        <begin position="69"/>
        <end position="136"/>
    </location>
</feature>
<feature type="compositionally biased region" description="Gly residues" evidence="2">
    <location>
        <begin position="43"/>
        <end position="54"/>
    </location>
</feature>
<feature type="compositionally biased region" description="Acidic residues" evidence="2">
    <location>
        <begin position="271"/>
        <end position="283"/>
    </location>
</feature>
<feature type="compositionally biased region" description="Acidic residues" evidence="2">
    <location>
        <begin position="302"/>
        <end position="317"/>
    </location>
</feature>
<feature type="compositionally biased region" description="Basic and acidic residues" evidence="2">
    <location>
        <begin position="332"/>
        <end position="345"/>
    </location>
</feature>
<feature type="compositionally biased region" description="Pro residues" evidence="2">
    <location>
        <begin position="370"/>
        <end position="380"/>
    </location>
</feature>
<feature type="modified residue" description="Phosphoserine" evidence="12 13">
    <location>
        <position position="53"/>
    </location>
</feature>
<feature type="modified residue" description="Phosphoserine" evidence="11 12 14">
    <location>
        <position position="206"/>
    </location>
</feature>
<feature type="modified residue" description="Phosphoserine" evidence="10">
    <location>
        <position position="276"/>
    </location>
</feature>
<feature type="splice variant" id="VSP_056170" description="In isoform 2." evidence="5">
    <location>
        <begin position="1"/>
        <end position="119"/>
    </location>
</feature>
<feature type="splice variant" id="VSP_056171" description="In isoform 2." evidence="5">
    <original>ESRRVKLQGILADLRDVDGLPPKVTGPPPG</original>
    <variation>GPELHSPTEWQGALSVGKASPMPDWVGTAG</variation>
    <location>
        <begin position="347"/>
        <end position="376"/>
    </location>
</feature>
<feature type="splice variant" id="VSP_056172" description="In isoform 2." evidence="5">
    <location>
        <begin position="377"/>
        <end position="753"/>
    </location>
</feature>
<feature type="splice variant" id="VSP_056738" description="In isoform 3." evidence="6">
    <original>E</original>
    <variation>EGSFGFSS</variation>
    <location>
        <position position="384"/>
    </location>
</feature>
<feature type="sequence variant" id="VAR_053419" description="In dbSNP:rs10409124.">
    <original>V</original>
    <variation>I</variation>
    <location>
        <position position="568"/>
    </location>
</feature>
<feature type="sequence conflict" description="In Ref. 1; AAF29527." evidence="6" ref="1">
    <original>I</original>
    <variation>V</variation>
    <location>
        <position position="356"/>
    </location>
</feature>
<dbReference type="EMBL" id="AF212940">
    <property type="protein sequence ID" value="AAF29527.1"/>
    <property type="molecule type" value="mRNA"/>
</dbReference>
<dbReference type="EMBL" id="AK298804">
    <property type="protein sequence ID" value="BAG60939.1"/>
    <property type="molecule type" value="mRNA"/>
</dbReference>
<dbReference type="EMBL" id="AC008622">
    <property type="status" value="NOT_ANNOTATED_CDS"/>
    <property type="molecule type" value="Genomic_DNA"/>
</dbReference>
<dbReference type="EMBL" id="AC008635">
    <property type="status" value="NOT_ANNOTATED_CDS"/>
    <property type="molecule type" value="Genomic_DNA"/>
</dbReference>
<dbReference type="EMBL" id="CH471126">
    <property type="protein sequence ID" value="EAW57442.1"/>
    <property type="molecule type" value="Genomic_DNA"/>
</dbReference>
<dbReference type="EMBL" id="CH471126">
    <property type="protein sequence ID" value="EAW57443.1"/>
    <property type="molecule type" value="Genomic_DNA"/>
</dbReference>
<dbReference type="EMBL" id="BC004910">
    <property type="protein sequence ID" value="AAH04910.2"/>
    <property type="molecule type" value="mRNA"/>
</dbReference>
<dbReference type="EMBL" id="BC034604">
    <property type="protein sequence ID" value="AAH34604.1"/>
    <property type="molecule type" value="mRNA"/>
</dbReference>
<dbReference type="CCDS" id="CCDS12690.1">
    <molecule id="Q9NRL3-1"/>
</dbReference>
<dbReference type="CCDS" id="CCDS42581.1">
    <molecule id="Q9NRL3-3"/>
</dbReference>
<dbReference type="RefSeq" id="NP_001034966.1">
    <molecule id="Q9NRL3-3"/>
    <property type="nucleotide sequence ID" value="NM_001039877.2"/>
</dbReference>
<dbReference type="RefSeq" id="NP_037535.2">
    <molecule id="Q9NRL3-1"/>
    <property type="nucleotide sequence ID" value="NM_013403.3"/>
</dbReference>
<dbReference type="SMR" id="Q9NRL3"/>
<dbReference type="BioGRID" id="118941">
    <property type="interactions" value="164"/>
</dbReference>
<dbReference type="ComplexPortal" id="CPX-8606">
    <property type="entry name" value="STRIPAK complex, STRIP1-STRN4 variant"/>
</dbReference>
<dbReference type="ComplexPortal" id="CPX-8607">
    <property type="entry name" value="STRIPAK complex, STRIP2-STRN4 variant"/>
</dbReference>
<dbReference type="CORUM" id="Q9NRL3"/>
<dbReference type="FunCoup" id="Q9NRL3">
    <property type="interactions" value="812"/>
</dbReference>
<dbReference type="IntAct" id="Q9NRL3">
    <property type="interactions" value="113"/>
</dbReference>
<dbReference type="MINT" id="Q9NRL3"/>
<dbReference type="STRING" id="9606.ENSP00000375777"/>
<dbReference type="GlyGen" id="Q9NRL3">
    <property type="glycosylation" value="4 sites, 1 O-linked glycan (2 sites)"/>
</dbReference>
<dbReference type="iPTMnet" id="Q9NRL3"/>
<dbReference type="PhosphoSitePlus" id="Q9NRL3"/>
<dbReference type="BioMuta" id="STRN4"/>
<dbReference type="DMDM" id="152031693"/>
<dbReference type="jPOST" id="Q9NRL3"/>
<dbReference type="MassIVE" id="Q9NRL3"/>
<dbReference type="PaxDb" id="9606-ENSP00000375777"/>
<dbReference type="PeptideAtlas" id="Q9NRL3"/>
<dbReference type="ProteomicsDB" id="29195"/>
<dbReference type="ProteomicsDB" id="4874"/>
<dbReference type="ProteomicsDB" id="82385">
    <molecule id="Q9NRL3-1"/>
</dbReference>
<dbReference type="Pumba" id="Q9NRL3"/>
<dbReference type="ABCD" id="Q9NRL3">
    <property type="antibodies" value="1 sequenced antibody"/>
</dbReference>
<dbReference type="Antibodypedia" id="49367">
    <property type="antibodies" value="179 antibodies from 25 providers"/>
</dbReference>
<dbReference type="DNASU" id="29888"/>
<dbReference type="Ensembl" id="ENST00000263280.11">
    <molecule id="Q9NRL3-1"/>
    <property type="protein sequence ID" value="ENSP00000263280.4"/>
    <property type="gene ID" value="ENSG00000090372.15"/>
</dbReference>
<dbReference type="Ensembl" id="ENST00000391910.7">
    <molecule id="Q9NRL3-3"/>
    <property type="protein sequence ID" value="ENSP00000375777.1"/>
    <property type="gene ID" value="ENSG00000090372.15"/>
</dbReference>
<dbReference type="Ensembl" id="ENST00000435164.6">
    <molecule id="Q9NRL3-2"/>
    <property type="protein sequence ID" value="ENSP00000473607.1"/>
    <property type="gene ID" value="ENSG00000090372.15"/>
</dbReference>
<dbReference type="GeneID" id="29888"/>
<dbReference type="KEGG" id="hsa:29888"/>
<dbReference type="MANE-Select" id="ENST00000263280.11">
    <property type="protein sequence ID" value="ENSP00000263280.4"/>
    <property type="RefSeq nucleotide sequence ID" value="NM_013403.3"/>
    <property type="RefSeq protein sequence ID" value="NP_037535.2"/>
</dbReference>
<dbReference type="UCSC" id="uc002pfl.4">
    <molecule id="Q9NRL3-1"/>
    <property type="organism name" value="human"/>
</dbReference>
<dbReference type="AGR" id="HGNC:15721"/>
<dbReference type="CTD" id="29888"/>
<dbReference type="DisGeNET" id="29888"/>
<dbReference type="GeneCards" id="STRN4"/>
<dbReference type="HGNC" id="HGNC:15721">
    <property type="gene designation" value="STRN4"/>
</dbReference>
<dbReference type="HPA" id="ENSG00000090372">
    <property type="expression patterns" value="Low tissue specificity"/>
</dbReference>
<dbReference type="MalaCards" id="STRN4"/>
<dbReference type="MIM" id="614767">
    <property type="type" value="gene"/>
</dbReference>
<dbReference type="neXtProt" id="NX_Q9NRL3"/>
<dbReference type="OpenTargets" id="ENSG00000090372"/>
<dbReference type="PharmGKB" id="PA134863218"/>
<dbReference type="VEuPathDB" id="HostDB:ENSG00000090372"/>
<dbReference type="eggNOG" id="KOG0642">
    <property type="taxonomic scope" value="Eukaryota"/>
</dbReference>
<dbReference type="GeneTree" id="ENSGT00950000183095"/>
<dbReference type="HOGENOM" id="CLU_009108_2_0_1"/>
<dbReference type="InParanoid" id="Q9NRL3"/>
<dbReference type="OMA" id="RCSMELN"/>
<dbReference type="OrthoDB" id="727118at2759"/>
<dbReference type="PAN-GO" id="Q9NRL3">
    <property type="GO annotations" value="5 GO annotations based on evolutionary models"/>
</dbReference>
<dbReference type="PhylomeDB" id="Q9NRL3"/>
<dbReference type="TreeFam" id="TF313387"/>
<dbReference type="PathwayCommons" id="Q9NRL3"/>
<dbReference type="SignaLink" id="Q9NRL3"/>
<dbReference type="SIGNOR" id="Q9NRL3"/>
<dbReference type="BioGRID-ORCS" id="29888">
    <property type="hits" value="26 hits in 1157 CRISPR screens"/>
</dbReference>
<dbReference type="CD-CODE" id="FB4E32DD">
    <property type="entry name" value="Presynaptic clusters and postsynaptic densities"/>
</dbReference>
<dbReference type="ChiTaRS" id="STRN4">
    <property type="organism name" value="human"/>
</dbReference>
<dbReference type="GeneWiki" id="STRN4"/>
<dbReference type="GenomeRNAi" id="29888"/>
<dbReference type="Pharos" id="Q9NRL3">
    <property type="development level" value="Tbio"/>
</dbReference>
<dbReference type="PRO" id="PR:Q9NRL3"/>
<dbReference type="Proteomes" id="UP000005640">
    <property type="component" value="Chromosome 19"/>
</dbReference>
<dbReference type="RNAct" id="Q9NRL3">
    <property type="molecule type" value="protein"/>
</dbReference>
<dbReference type="Bgee" id="ENSG00000090372">
    <property type="expression patterns" value="Expressed in left testis and 160 other cell types or tissues"/>
</dbReference>
<dbReference type="ExpressionAtlas" id="Q9NRL3">
    <property type="expression patterns" value="baseline and differential"/>
</dbReference>
<dbReference type="GO" id="GO:0005737">
    <property type="term" value="C:cytoplasm"/>
    <property type="evidence" value="ECO:0007669"/>
    <property type="project" value="UniProtKB-SubCell"/>
</dbReference>
<dbReference type="GO" id="GO:0030425">
    <property type="term" value="C:dendrite"/>
    <property type="evidence" value="ECO:0000318"/>
    <property type="project" value="GO_Central"/>
</dbReference>
<dbReference type="GO" id="GO:0043197">
    <property type="term" value="C:dendritic spine"/>
    <property type="evidence" value="ECO:0007669"/>
    <property type="project" value="Ensembl"/>
</dbReference>
<dbReference type="GO" id="GO:0090443">
    <property type="term" value="C:FAR/SIN/STRIPAK complex"/>
    <property type="evidence" value="ECO:0000314"/>
    <property type="project" value="UniProtKB"/>
</dbReference>
<dbReference type="GO" id="GO:0098982">
    <property type="term" value="C:GABA-ergic synapse"/>
    <property type="evidence" value="ECO:0007669"/>
    <property type="project" value="Ensembl"/>
</dbReference>
<dbReference type="GO" id="GO:0098978">
    <property type="term" value="C:glutamatergic synapse"/>
    <property type="evidence" value="ECO:0007669"/>
    <property type="project" value="Ensembl"/>
</dbReference>
<dbReference type="GO" id="GO:0070016">
    <property type="term" value="F:armadillo repeat domain binding"/>
    <property type="evidence" value="ECO:0000353"/>
    <property type="project" value="UniProtKB"/>
</dbReference>
<dbReference type="GO" id="GO:0005516">
    <property type="term" value="F:calmodulin binding"/>
    <property type="evidence" value="ECO:0000318"/>
    <property type="project" value="GO_Central"/>
</dbReference>
<dbReference type="GO" id="GO:0051721">
    <property type="term" value="F:protein phosphatase 2A binding"/>
    <property type="evidence" value="ECO:0000314"/>
    <property type="project" value="UniProtKB"/>
</dbReference>
<dbReference type="GO" id="GO:0044877">
    <property type="term" value="F:protein-containing complex binding"/>
    <property type="evidence" value="ECO:0000314"/>
    <property type="project" value="UniProtKB"/>
</dbReference>
<dbReference type="GO" id="GO:0030674">
    <property type="term" value="F:protein-macromolecule adaptor activity"/>
    <property type="evidence" value="ECO:0000314"/>
    <property type="project" value="UniProtKB"/>
</dbReference>
<dbReference type="GO" id="GO:0035331">
    <property type="term" value="P:negative regulation of hippo signaling"/>
    <property type="evidence" value="ECO:0000314"/>
    <property type="project" value="UniProtKB"/>
</dbReference>
<dbReference type="GO" id="GO:0099159">
    <property type="term" value="P:regulation of modification of postsynaptic structure"/>
    <property type="evidence" value="ECO:0007669"/>
    <property type="project" value="Ensembl"/>
</dbReference>
<dbReference type="GO" id="GO:0009966">
    <property type="term" value="P:regulation of signal transduction"/>
    <property type="evidence" value="ECO:0000318"/>
    <property type="project" value="GO_Central"/>
</dbReference>
<dbReference type="CDD" id="cd00200">
    <property type="entry name" value="WD40"/>
    <property type="match status" value="1"/>
</dbReference>
<dbReference type="FunFam" id="1.20.5.300:FF:000001">
    <property type="entry name" value="striatin isoform X1"/>
    <property type="match status" value="1"/>
</dbReference>
<dbReference type="FunFam" id="2.130.10.10:FF:000246">
    <property type="entry name" value="striatin-4 isoform X1"/>
    <property type="match status" value="1"/>
</dbReference>
<dbReference type="FunFam" id="2.130.10.10:FF:000317">
    <property type="entry name" value="striatin-4 isoform X2"/>
    <property type="match status" value="1"/>
</dbReference>
<dbReference type="FunFam" id="2.130.10.10:FF:000756">
    <property type="entry name" value="striatin-4 isoform X2"/>
    <property type="match status" value="1"/>
</dbReference>
<dbReference type="Gene3D" id="1.20.5.300">
    <property type="match status" value="1"/>
</dbReference>
<dbReference type="Gene3D" id="2.130.10.10">
    <property type="entry name" value="YVTN repeat-like/Quinoprotein amine dehydrogenase"/>
    <property type="match status" value="3"/>
</dbReference>
<dbReference type="InterPro" id="IPR020472">
    <property type="entry name" value="G-protein_beta_WD-40_rep"/>
</dbReference>
<dbReference type="InterPro" id="IPR013258">
    <property type="entry name" value="Striatin_N"/>
</dbReference>
<dbReference type="InterPro" id="IPR015943">
    <property type="entry name" value="WD40/YVTN_repeat-like_dom_sf"/>
</dbReference>
<dbReference type="InterPro" id="IPR019775">
    <property type="entry name" value="WD40_repeat_CS"/>
</dbReference>
<dbReference type="InterPro" id="IPR036322">
    <property type="entry name" value="WD40_repeat_dom_sf"/>
</dbReference>
<dbReference type="InterPro" id="IPR001680">
    <property type="entry name" value="WD40_rpt"/>
</dbReference>
<dbReference type="InterPro" id="IPR051488">
    <property type="entry name" value="WD_repeat_striatin"/>
</dbReference>
<dbReference type="PANTHER" id="PTHR15653">
    <property type="entry name" value="STRIATIN"/>
    <property type="match status" value="1"/>
</dbReference>
<dbReference type="PANTHER" id="PTHR15653:SF1">
    <property type="entry name" value="STRIATIN-4"/>
    <property type="match status" value="1"/>
</dbReference>
<dbReference type="Pfam" id="PF08232">
    <property type="entry name" value="Striatin"/>
    <property type="match status" value="1"/>
</dbReference>
<dbReference type="Pfam" id="PF00400">
    <property type="entry name" value="WD40"/>
    <property type="match status" value="5"/>
</dbReference>
<dbReference type="PRINTS" id="PR00320">
    <property type="entry name" value="GPROTEINBRPT"/>
</dbReference>
<dbReference type="SMART" id="SM00320">
    <property type="entry name" value="WD40"/>
    <property type="match status" value="7"/>
</dbReference>
<dbReference type="SUPFAM" id="SSF50978">
    <property type="entry name" value="WD40 repeat-like"/>
    <property type="match status" value="1"/>
</dbReference>
<dbReference type="PROSITE" id="PS00678">
    <property type="entry name" value="WD_REPEATS_1"/>
    <property type="match status" value="1"/>
</dbReference>
<dbReference type="PROSITE" id="PS50082">
    <property type="entry name" value="WD_REPEATS_2"/>
    <property type="match status" value="4"/>
</dbReference>
<dbReference type="PROSITE" id="PS50294">
    <property type="entry name" value="WD_REPEATS_REGION"/>
    <property type="match status" value="1"/>
</dbReference>
<protein>
    <recommendedName>
        <fullName>Striatin-4</fullName>
    </recommendedName>
    <alternativeName>
        <fullName>Zinedin</fullName>
    </alternativeName>
</protein>
<evidence type="ECO:0000255" key="1"/>
<evidence type="ECO:0000256" key="2">
    <source>
        <dbReference type="SAM" id="MobiDB-lite"/>
    </source>
</evidence>
<evidence type="ECO:0000269" key="3">
    <source>
    </source>
</evidence>
<evidence type="ECO:0000269" key="4">
    <source>
    </source>
</evidence>
<evidence type="ECO:0000303" key="5">
    <source>
    </source>
</evidence>
<evidence type="ECO:0000305" key="6"/>
<evidence type="ECO:0000305" key="7">
    <source>
    </source>
</evidence>
<evidence type="ECO:0000305" key="8">
    <source>
    </source>
</evidence>
<evidence type="ECO:0000312" key="9">
    <source>
        <dbReference type="HGNC" id="HGNC:15721"/>
    </source>
</evidence>
<evidence type="ECO:0007744" key="10">
    <source>
    </source>
</evidence>
<evidence type="ECO:0007744" key="11">
    <source>
    </source>
</evidence>
<evidence type="ECO:0007744" key="12">
    <source>
    </source>
</evidence>
<evidence type="ECO:0007744" key="13">
    <source>
    </source>
</evidence>
<evidence type="ECO:0007744" key="14">
    <source>
    </source>
</evidence>
<keyword id="KW-0025">Alternative splicing</keyword>
<keyword id="KW-0112">Calmodulin-binding</keyword>
<keyword id="KW-0175">Coiled coil</keyword>
<keyword id="KW-0963">Cytoplasm</keyword>
<keyword id="KW-0597">Phosphoprotein</keyword>
<keyword id="KW-1267">Proteomics identification</keyword>
<keyword id="KW-1185">Reference proteome</keyword>
<keyword id="KW-0677">Repeat</keyword>
<keyword id="KW-0853">WD repeat</keyword>
<accession>Q9NRL3</accession>
<accession>A0A024R0V2</accession>
<accession>B4DQH7</accession>
<accession>F8VYA6</accession>
<accession>Q8NE53</accession>
<proteinExistence type="evidence at protein level"/>
<sequence length="753" mass="80596">MMEERAAAAVAAAASSCRPLGSGAGPGPTGAAPVSAPAPGPGPAGKGGGGGGSPGPTAGPEPLSLPGILHFIQHEWARFEAEKARWEAERAELQAQVAFLQGERKGQENLKTDLVRRIKMLEYALKQERAKYHKLKFGTDLNQGEKKADVSEQVSNGPVESVTLENSPLVWKEGRQLLRQYLEEVGYTDTILDMRSKRVRSLLGRSLELNGAVEPSEGAPRAPPGPAGLSGGESLLVKQIEEQIKRNAAGKDGKERLGGSVLGQIPFLQNCEDEDSDEDDELDSVQHKKQRVKLPSKALVPEMEDEDEEDDSEDAINEFDFLGSGEDGEGAPDPRRCTVDGSPHELESRRVKLQGILADLRDVDGLPPKVTGPPPGTPQPRPHEDVFIMDTIGGGEVSLGDLADLTVTNDNDLSCDLSDSKDAFKKTWNPKFTLRSHYDGIRSLAFHHSQSALLTASEDGTLKLWNLQKAVTAKKNAALDVEPIHAFRAHRGPVLAVAMGSNSEYCYSGGADACIHSWKIPDLSMDPYDGYDPSVLSHVLEGHGDAVWGLAFSPTSQRLASCSADGTVRIWDPSSSSPACLCTFPTASEHGVPTSVAFTSTEPAHIVASFRSGDTVLYDMEVGSALLTLESRGSSGPTQINQVVSHPNQPLTITAHDDRGIRFLDNRTGKPVHSMVAHLDAVTCLAVDPNGAFLMSGSHDCSLRLWSLDNKTCVQEITAHRKKHEEAIHAVACHPSKALIASAGADALAKVFV</sequence>
<gene>
    <name evidence="9" type="primary">STRN4</name>
    <name type="synonym">ZIN</name>
</gene>
<name>STRN4_HUMAN</name>
<organism>
    <name type="scientific">Homo sapiens</name>
    <name type="common">Human</name>
    <dbReference type="NCBI Taxonomy" id="9606"/>
    <lineage>
        <taxon>Eukaryota</taxon>
        <taxon>Metazoa</taxon>
        <taxon>Chordata</taxon>
        <taxon>Craniata</taxon>
        <taxon>Vertebrata</taxon>
        <taxon>Euteleostomi</taxon>
        <taxon>Mammalia</taxon>
        <taxon>Eutheria</taxon>
        <taxon>Euarchontoglires</taxon>
        <taxon>Primates</taxon>
        <taxon>Haplorrhini</taxon>
        <taxon>Catarrhini</taxon>
        <taxon>Hominidae</taxon>
        <taxon>Homo</taxon>
    </lineage>
</organism>
<comment type="function">
    <text evidence="3 4 8">Calmodulin-binding scaffolding protein which is the center of the striatin-interacting phosphatase and kinase (STRIPAK) complexes (PubMed:18782753, PubMed:32640226). STRIPAK complexes have critical roles in protein (de)phosphorylation and are regulators of multiple signaling pathways including Hippo, MAPK, nuclear receptor and cytoskeleton remodeling (PubMed:32640226). Different types of STRIPAK complexes are involved in a variety of biological processes such as cell growth, differentiation, apoptosis, metabolism and immune regulation (Probable). Key regulator of the expanded Hippo signaling pathway by interacting and allowing the inhibition of MAP4K kinases by the STRIPAK complex (PubMed:32640226).</text>
</comment>
<comment type="subunit">
    <text evidence="3 4">Part of the core of STRIPAK complexes composed of PP2A catalytic and scaffolding subunits, the striatins (PP2A regulatory subunits), the striatin-associated proteins MOB4, STRIP1 and STRIP2, PDCD10 and members of the STE20 kinases, such as STK24 and STK26 (PubMed:18782753, PubMed:32640226). Interacts with CTTNBP2NL (PubMed:18782753).</text>
</comment>
<comment type="interaction">
    <interactant intactId="EBI-717245">
        <id>Q9NRL3</id>
    </interactant>
    <interactant intactId="EBI-750300">
        <id>Q01658</id>
        <label>DR1</label>
    </interactant>
    <organismsDiffer>false</organismsDiffer>
    <experiments>3</experiments>
</comment>
<comment type="interaction">
    <interactant intactId="EBI-717245">
        <id>Q9NRL3</id>
    </interactant>
    <interactant intactId="EBI-1054873">
        <id>Q9Y5Q9</id>
        <label>GTF3C3</label>
    </interactant>
    <organismsDiffer>false</organismsDiffer>
    <experiments>3</experiments>
</comment>
<comment type="interaction">
    <interactant intactId="EBI-717245">
        <id>Q9NRL3</id>
    </interactant>
    <interactant intactId="EBI-852823">
        <id>P05412</id>
        <label>JUN</label>
    </interactant>
    <organismsDiffer>false</organismsDiffer>
    <experiments>3</experiments>
</comment>
<comment type="subcellular location">
    <subcellularLocation>
        <location evidence="7">Cytoplasm</location>
    </subcellularLocation>
</comment>
<comment type="alternative products">
    <event type="alternative splicing"/>
    <isoform>
        <id>Q9NRL3-1</id>
        <name>1</name>
        <sequence type="displayed"/>
    </isoform>
    <isoform>
        <id>Q9NRL3-2</id>
        <name>2</name>
        <sequence type="described" ref="VSP_056170 VSP_056171 VSP_056172"/>
    </isoform>
    <isoform>
        <id>Q9NRL3-3</id>
        <name>3</name>
        <sequence type="described" ref="VSP_056738"/>
    </isoform>
</comment>
<comment type="miscellaneous">
    <text>The name 'Zinedin' probably originates from the name of the famous soccer player from Marseille (Zinedine Zidane).</text>
</comment>
<comment type="similarity">
    <text evidence="6">Belongs to the WD repeat striatin family.</text>
</comment>